<protein>
    <recommendedName>
        <fullName evidence="1">Chorismate synthase</fullName>
        <shortName evidence="1">CS</shortName>
        <ecNumber evidence="1">4.2.3.5</ecNumber>
    </recommendedName>
    <alternativeName>
        <fullName evidence="1">5-enolpyruvylshikimate-3-phosphate phospholyase</fullName>
    </alternativeName>
</protein>
<dbReference type="EC" id="4.2.3.5" evidence="1"/>
<dbReference type="EMBL" id="CP000016">
    <property type="protein sequence ID" value="AAZ41130.1"/>
    <property type="molecule type" value="Genomic_DNA"/>
</dbReference>
<dbReference type="RefSeq" id="WP_011283041.1">
    <property type="nucleotide sequence ID" value="NC_007292.1"/>
</dbReference>
<dbReference type="SMR" id="Q492G9"/>
<dbReference type="STRING" id="291272.BPEN_516"/>
<dbReference type="KEGG" id="bpn:BPEN_516"/>
<dbReference type="eggNOG" id="COG0082">
    <property type="taxonomic scope" value="Bacteria"/>
</dbReference>
<dbReference type="HOGENOM" id="CLU_034547_0_2_6"/>
<dbReference type="OrthoDB" id="9771806at2"/>
<dbReference type="UniPathway" id="UPA00053">
    <property type="reaction ID" value="UER00090"/>
</dbReference>
<dbReference type="Proteomes" id="UP000007794">
    <property type="component" value="Chromosome"/>
</dbReference>
<dbReference type="GO" id="GO:0005829">
    <property type="term" value="C:cytosol"/>
    <property type="evidence" value="ECO:0007669"/>
    <property type="project" value="TreeGrafter"/>
</dbReference>
<dbReference type="GO" id="GO:0004107">
    <property type="term" value="F:chorismate synthase activity"/>
    <property type="evidence" value="ECO:0007669"/>
    <property type="project" value="UniProtKB-UniRule"/>
</dbReference>
<dbReference type="GO" id="GO:0010181">
    <property type="term" value="F:FMN binding"/>
    <property type="evidence" value="ECO:0007669"/>
    <property type="project" value="TreeGrafter"/>
</dbReference>
<dbReference type="GO" id="GO:0008652">
    <property type="term" value="P:amino acid biosynthetic process"/>
    <property type="evidence" value="ECO:0007669"/>
    <property type="project" value="UniProtKB-KW"/>
</dbReference>
<dbReference type="GO" id="GO:0009073">
    <property type="term" value="P:aromatic amino acid family biosynthetic process"/>
    <property type="evidence" value="ECO:0007669"/>
    <property type="project" value="UniProtKB-KW"/>
</dbReference>
<dbReference type="GO" id="GO:0009423">
    <property type="term" value="P:chorismate biosynthetic process"/>
    <property type="evidence" value="ECO:0007669"/>
    <property type="project" value="UniProtKB-UniRule"/>
</dbReference>
<dbReference type="CDD" id="cd07304">
    <property type="entry name" value="Chorismate_synthase"/>
    <property type="match status" value="1"/>
</dbReference>
<dbReference type="FunFam" id="3.60.150.10:FF:000001">
    <property type="entry name" value="Chorismate synthase"/>
    <property type="match status" value="1"/>
</dbReference>
<dbReference type="Gene3D" id="3.60.150.10">
    <property type="entry name" value="Chorismate synthase AroC"/>
    <property type="match status" value="1"/>
</dbReference>
<dbReference type="HAMAP" id="MF_00300">
    <property type="entry name" value="Chorismate_synth"/>
    <property type="match status" value="1"/>
</dbReference>
<dbReference type="InterPro" id="IPR000453">
    <property type="entry name" value="Chorismate_synth"/>
</dbReference>
<dbReference type="InterPro" id="IPR035904">
    <property type="entry name" value="Chorismate_synth_AroC_sf"/>
</dbReference>
<dbReference type="InterPro" id="IPR020541">
    <property type="entry name" value="Chorismate_synthase_CS"/>
</dbReference>
<dbReference type="NCBIfam" id="TIGR00033">
    <property type="entry name" value="aroC"/>
    <property type="match status" value="1"/>
</dbReference>
<dbReference type="NCBIfam" id="NF003793">
    <property type="entry name" value="PRK05382.1"/>
    <property type="match status" value="1"/>
</dbReference>
<dbReference type="PANTHER" id="PTHR21085">
    <property type="entry name" value="CHORISMATE SYNTHASE"/>
    <property type="match status" value="1"/>
</dbReference>
<dbReference type="PANTHER" id="PTHR21085:SF0">
    <property type="entry name" value="CHORISMATE SYNTHASE"/>
    <property type="match status" value="1"/>
</dbReference>
<dbReference type="Pfam" id="PF01264">
    <property type="entry name" value="Chorismate_synt"/>
    <property type="match status" value="1"/>
</dbReference>
<dbReference type="PIRSF" id="PIRSF001456">
    <property type="entry name" value="Chorismate_synth"/>
    <property type="match status" value="1"/>
</dbReference>
<dbReference type="SUPFAM" id="SSF103263">
    <property type="entry name" value="Chorismate synthase, AroC"/>
    <property type="match status" value="1"/>
</dbReference>
<dbReference type="PROSITE" id="PS00787">
    <property type="entry name" value="CHORISMATE_SYNTHASE_1"/>
    <property type="match status" value="1"/>
</dbReference>
<dbReference type="PROSITE" id="PS00788">
    <property type="entry name" value="CHORISMATE_SYNTHASE_2"/>
    <property type="match status" value="1"/>
</dbReference>
<dbReference type="PROSITE" id="PS00789">
    <property type="entry name" value="CHORISMATE_SYNTHASE_3"/>
    <property type="match status" value="1"/>
</dbReference>
<accession>Q492G9</accession>
<sequence length="354" mass="38719">MAGNSIGQFFRVTTFGESHGSALGGIIDGVPPSLPLTEKDLQYDLDRRRPGSSRYTSQRSELDTVEILSGVFNGKTTGTSIGLLIKNTDHRPQDYEKIKNLYRPGHADYTYEKKYGFRDYRGGGRSSARETAVRVAAGAVAKKYLFNKKNIKIRGFLAQMGDVHCNLKDWRQVNNNPFFCPDLEKLTALDTLINNLQKSGDSIGAKITVIAENIPIGLGEPVFDRLDADLAHALMSINAVKGVEIGDGFSVITKRGSEHRDEMTLDGFNSNNSGGILGGISNGQPIIMHIAIKPTSSITVPGKTITRENEETQVVTIGRHDPCIGIRVVPIAEAMVAIVVIDHLLRQRAQCEKI</sequence>
<keyword id="KW-0028">Amino-acid biosynthesis</keyword>
<keyword id="KW-0057">Aromatic amino acid biosynthesis</keyword>
<keyword id="KW-0274">FAD</keyword>
<keyword id="KW-0285">Flavoprotein</keyword>
<keyword id="KW-0288">FMN</keyword>
<keyword id="KW-0456">Lyase</keyword>
<keyword id="KW-0521">NADP</keyword>
<keyword id="KW-1185">Reference proteome</keyword>
<comment type="function">
    <text evidence="1">Catalyzes the anti-1,4-elimination of the C-3 phosphate and the C-6 proR hydrogen from 5-enolpyruvylshikimate-3-phosphate (EPSP) to yield chorismate, which is the branch point compound that serves as the starting substrate for the three terminal pathways of aromatic amino acid biosynthesis. This reaction introduces a second double bond into the aromatic ring system.</text>
</comment>
<comment type="catalytic activity">
    <reaction evidence="1">
        <text>5-O-(1-carboxyvinyl)-3-phosphoshikimate = chorismate + phosphate</text>
        <dbReference type="Rhea" id="RHEA:21020"/>
        <dbReference type="ChEBI" id="CHEBI:29748"/>
        <dbReference type="ChEBI" id="CHEBI:43474"/>
        <dbReference type="ChEBI" id="CHEBI:57701"/>
        <dbReference type="EC" id="4.2.3.5"/>
    </reaction>
</comment>
<comment type="cofactor">
    <cofactor evidence="1">
        <name>FMNH2</name>
        <dbReference type="ChEBI" id="CHEBI:57618"/>
    </cofactor>
    <text evidence="1">Reduced FMN (FMNH(2)).</text>
</comment>
<comment type="pathway">
    <text evidence="1">Metabolic intermediate biosynthesis; chorismate biosynthesis; chorismate from D-erythrose 4-phosphate and phosphoenolpyruvate: step 7/7.</text>
</comment>
<comment type="subunit">
    <text evidence="1">Homotetramer.</text>
</comment>
<comment type="similarity">
    <text evidence="1">Belongs to the chorismate synthase family.</text>
</comment>
<name>AROC_BLOPB</name>
<organism>
    <name type="scientific">Blochmanniella pennsylvanica (strain BPEN)</name>
    <dbReference type="NCBI Taxonomy" id="291272"/>
    <lineage>
        <taxon>Bacteria</taxon>
        <taxon>Pseudomonadati</taxon>
        <taxon>Pseudomonadota</taxon>
        <taxon>Gammaproteobacteria</taxon>
        <taxon>Enterobacterales</taxon>
        <taxon>Enterobacteriaceae</taxon>
        <taxon>ant endosymbionts</taxon>
        <taxon>Candidatus Blochmanniella</taxon>
    </lineage>
</organism>
<feature type="chain" id="PRO_0000256273" description="Chorismate synthase">
    <location>
        <begin position="1"/>
        <end position="354"/>
    </location>
</feature>
<feature type="binding site" evidence="1">
    <location>
        <position position="48"/>
    </location>
    <ligand>
        <name>NADP(+)</name>
        <dbReference type="ChEBI" id="CHEBI:58349"/>
    </ligand>
</feature>
<feature type="binding site" evidence="1">
    <location>
        <position position="54"/>
    </location>
    <ligand>
        <name>NADP(+)</name>
        <dbReference type="ChEBI" id="CHEBI:58349"/>
    </ligand>
</feature>
<feature type="binding site" evidence="1">
    <location>
        <begin position="125"/>
        <end position="127"/>
    </location>
    <ligand>
        <name>FMN</name>
        <dbReference type="ChEBI" id="CHEBI:58210"/>
    </ligand>
</feature>
<feature type="binding site" evidence="1">
    <location>
        <begin position="238"/>
        <end position="239"/>
    </location>
    <ligand>
        <name>FMN</name>
        <dbReference type="ChEBI" id="CHEBI:58210"/>
    </ligand>
</feature>
<feature type="binding site" evidence="1">
    <location>
        <position position="278"/>
    </location>
    <ligand>
        <name>FMN</name>
        <dbReference type="ChEBI" id="CHEBI:58210"/>
    </ligand>
</feature>
<feature type="binding site" evidence="1">
    <location>
        <begin position="293"/>
        <end position="297"/>
    </location>
    <ligand>
        <name>FMN</name>
        <dbReference type="ChEBI" id="CHEBI:58210"/>
    </ligand>
</feature>
<feature type="binding site" evidence="1">
    <location>
        <position position="319"/>
    </location>
    <ligand>
        <name>FMN</name>
        <dbReference type="ChEBI" id="CHEBI:58210"/>
    </ligand>
</feature>
<evidence type="ECO:0000255" key="1">
    <source>
        <dbReference type="HAMAP-Rule" id="MF_00300"/>
    </source>
</evidence>
<proteinExistence type="inferred from homology"/>
<gene>
    <name evidence="1" type="primary">aroC</name>
    <name type="ordered locus">BPEN_516</name>
</gene>
<reference key="1">
    <citation type="journal article" date="2005" name="Genome Res.">
        <title>Genome sequence of Blochmannia pennsylvanicus indicates parallel evolutionary trends among bacterial mutualists of insects.</title>
        <authorList>
            <person name="Degnan P.H."/>
            <person name="Lazarus A.B."/>
            <person name="Wernegreen J.J."/>
        </authorList>
    </citation>
    <scope>NUCLEOTIDE SEQUENCE [LARGE SCALE GENOMIC DNA]</scope>
    <source>
        <strain>BPEN</strain>
    </source>
</reference>